<name>MURE_NITEU</name>
<sequence length="521" mass="56675">MMSTSSDSRSDEGHAACLLNQLDVKVRHLVADSRKLKPGDTFLACAGERHDARNDIPQAIARGVNAIIWEKQGFSWKPEWKIPNLGVAGLRHEAGKIASEAYGHPSRHLWLVGITGTNGKTTCSQWYAQAMAALGKKTAVIGTLGHGFPGALYPSEHTTPDAVYLQQLMAEYLHQGASSLVMEASSHGLSQDRLIGSEFAVAVLTNLTRDHLDYHDSMDAYAAAKAKLFFWEGLQYAVLNLDEVLGVELSQQLAGKDLSIIGYGFKQPRQTAQTAGNQKILYGSNLQFTTQQIGFDVEFCNRYASLQCNVTGRYNAYNLLAVLAALLASNIDLDDAITALRQVQPIPGRMEKLGGGNQPVVIVDYAHTPDALNEVLTGLRETLAGTRIKKRIRKNQAKLICVIGCGGDRDRGKRPLIGEIASRLADEVIITSDNPRNENPADIISEVMLGASGKHCTSEVDRTAAIYRAIHGARKGDIVLIAGKGAETSQEIQGKKYPYDDREVVRQVLHDLAGPELQVQG</sequence>
<organism>
    <name type="scientific">Nitrosomonas europaea (strain ATCC 19718 / CIP 103999 / KCTC 2705 / NBRC 14298)</name>
    <dbReference type="NCBI Taxonomy" id="228410"/>
    <lineage>
        <taxon>Bacteria</taxon>
        <taxon>Pseudomonadati</taxon>
        <taxon>Pseudomonadota</taxon>
        <taxon>Betaproteobacteria</taxon>
        <taxon>Nitrosomonadales</taxon>
        <taxon>Nitrosomonadaceae</taxon>
        <taxon>Nitrosomonas</taxon>
    </lineage>
</organism>
<accession>Q82VS8</accession>
<proteinExistence type="inferred from homology"/>
<keyword id="KW-0067">ATP-binding</keyword>
<keyword id="KW-0131">Cell cycle</keyword>
<keyword id="KW-0132">Cell division</keyword>
<keyword id="KW-0133">Cell shape</keyword>
<keyword id="KW-0961">Cell wall biogenesis/degradation</keyword>
<keyword id="KW-0963">Cytoplasm</keyword>
<keyword id="KW-0436">Ligase</keyword>
<keyword id="KW-0460">Magnesium</keyword>
<keyword id="KW-0547">Nucleotide-binding</keyword>
<keyword id="KW-0573">Peptidoglycan synthesis</keyword>
<keyword id="KW-1185">Reference proteome</keyword>
<comment type="function">
    <text evidence="1">Catalyzes the addition of meso-diaminopimelic acid to the nucleotide precursor UDP-N-acetylmuramoyl-L-alanyl-D-glutamate (UMAG) in the biosynthesis of bacterial cell-wall peptidoglycan.</text>
</comment>
<comment type="catalytic activity">
    <reaction evidence="1">
        <text>UDP-N-acetyl-alpha-D-muramoyl-L-alanyl-D-glutamate + meso-2,6-diaminopimelate + ATP = UDP-N-acetyl-alpha-D-muramoyl-L-alanyl-gamma-D-glutamyl-meso-2,6-diaminopimelate + ADP + phosphate + H(+)</text>
        <dbReference type="Rhea" id="RHEA:23676"/>
        <dbReference type="ChEBI" id="CHEBI:15378"/>
        <dbReference type="ChEBI" id="CHEBI:30616"/>
        <dbReference type="ChEBI" id="CHEBI:43474"/>
        <dbReference type="ChEBI" id="CHEBI:57791"/>
        <dbReference type="ChEBI" id="CHEBI:83900"/>
        <dbReference type="ChEBI" id="CHEBI:83905"/>
        <dbReference type="ChEBI" id="CHEBI:456216"/>
        <dbReference type="EC" id="6.3.2.13"/>
    </reaction>
</comment>
<comment type="cofactor">
    <cofactor evidence="1">
        <name>Mg(2+)</name>
        <dbReference type="ChEBI" id="CHEBI:18420"/>
    </cofactor>
</comment>
<comment type="pathway">
    <text evidence="1">Cell wall biogenesis; peptidoglycan biosynthesis.</text>
</comment>
<comment type="subcellular location">
    <subcellularLocation>
        <location evidence="1">Cytoplasm</location>
    </subcellularLocation>
</comment>
<comment type="PTM">
    <text evidence="1">Carboxylation is probably crucial for Mg(2+) binding and, consequently, for the gamma-phosphate positioning of ATP.</text>
</comment>
<comment type="similarity">
    <text evidence="1">Belongs to the MurCDEF family. MurE subfamily.</text>
</comment>
<gene>
    <name evidence="1" type="primary">murE</name>
    <name type="ordered locus">NE0986</name>
</gene>
<reference key="1">
    <citation type="journal article" date="2003" name="J. Bacteriol.">
        <title>Complete genome sequence of the ammonia-oxidizing bacterium and obligate chemolithoautotroph Nitrosomonas europaea.</title>
        <authorList>
            <person name="Chain P."/>
            <person name="Lamerdin J.E."/>
            <person name="Larimer F.W."/>
            <person name="Regala W."/>
            <person name="Lao V."/>
            <person name="Land M.L."/>
            <person name="Hauser L."/>
            <person name="Hooper A.B."/>
            <person name="Klotz M.G."/>
            <person name="Norton J."/>
            <person name="Sayavedra-Soto L.A."/>
            <person name="Arciero D.M."/>
            <person name="Hommes N.G."/>
            <person name="Whittaker M.M."/>
            <person name="Arp D.J."/>
        </authorList>
    </citation>
    <scope>NUCLEOTIDE SEQUENCE [LARGE SCALE GENOMIC DNA]</scope>
    <source>
        <strain>ATCC 19718 / CIP 103999 / KCTC 2705 / NBRC 14298</strain>
    </source>
</reference>
<dbReference type="EC" id="6.3.2.13" evidence="1"/>
<dbReference type="EMBL" id="AL954747">
    <property type="protein sequence ID" value="CAD84897.1"/>
    <property type="molecule type" value="Genomic_DNA"/>
</dbReference>
<dbReference type="RefSeq" id="WP_011111595.1">
    <property type="nucleotide sequence ID" value="NC_004757.1"/>
</dbReference>
<dbReference type="SMR" id="Q82VS8"/>
<dbReference type="STRING" id="228410.NE0986"/>
<dbReference type="GeneID" id="87104177"/>
<dbReference type="KEGG" id="neu:NE0986"/>
<dbReference type="eggNOG" id="COG0769">
    <property type="taxonomic scope" value="Bacteria"/>
</dbReference>
<dbReference type="HOGENOM" id="CLU_022291_3_2_4"/>
<dbReference type="OrthoDB" id="9800958at2"/>
<dbReference type="PhylomeDB" id="Q82VS8"/>
<dbReference type="UniPathway" id="UPA00219"/>
<dbReference type="Proteomes" id="UP000001416">
    <property type="component" value="Chromosome"/>
</dbReference>
<dbReference type="GO" id="GO:0005737">
    <property type="term" value="C:cytoplasm"/>
    <property type="evidence" value="ECO:0007669"/>
    <property type="project" value="UniProtKB-SubCell"/>
</dbReference>
<dbReference type="GO" id="GO:0005524">
    <property type="term" value="F:ATP binding"/>
    <property type="evidence" value="ECO:0007669"/>
    <property type="project" value="UniProtKB-UniRule"/>
</dbReference>
<dbReference type="GO" id="GO:0000287">
    <property type="term" value="F:magnesium ion binding"/>
    <property type="evidence" value="ECO:0007669"/>
    <property type="project" value="UniProtKB-UniRule"/>
</dbReference>
<dbReference type="GO" id="GO:0008765">
    <property type="term" value="F:UDP-N-acetylmuramoylalanyl-D-glutamate-2,6-diaminopimelate ligase activity"/>
    <property type="evidence" value="ECO:0007669"/>
    <property type="project" value="UniProtKB-UniRule"/>
</dbReference>
<dbReference type="GO" id="GO:0051301">
    <property type="term" value="P:cell division"/>
    <property type="evidence" value="ECO:0007669"/>
    <property type="project" value="UniProtKB-KW"/>
</dbReference>
<dbReference type="GO" id="GO:0071555">
    <property type="term" value="P:cell wall organization"/>
    <property type="evidence" value="ECO:0007669"/>
    <property type="project" value="UniProtKB-KW"/>
</dbReference>
<dbReference type="GO" id="GO:0009252">
    <property type="term" value="P:peptidoglycan biosynthetic process"/>
    <property type="evidence" value="ECO:0007669"/>
    <property type="project" value="UniProtKB-UniRule"/>
</dbReference>
<dbReference type="GO" id="GO:0008360">
    <property type="term" value="P:regulation of cell shape"/>
    <property type="evidence" value="ECO:0007669"/>
    <property type="project" value="UniProtKB-KW"/>
</dbReference>
<dbReference type="Gene3D" id="3.90.190.20">
    <property type="entry name" value="Mur ligase, C-terminal domain"/>
    <property type="match status" value="1"/>
</dbReference>
<dbReference type="Gene3D" id="3.40.1190.10">
    <property type="entry name" value="Mur-like, catalytic domain"/>
    <property type="match status" value="1"/>
</dbReference>
<dbReference type="Gene3D" id="3.40.1390.10">
    <property type="entry name" value="MurE/MurF, N-terminal domain"/>
    <property type="match status" value="1"/>
</dbReference>
<dbReference type="HAMAP" id="MF_00208">
    <property type="entry name" value="MurE"/>
    <property type="match status" value="1"/>
</dbReference>
<dbReference type="InterPro" id="IPR036565">
    <property type="entry name" value="Mur-like_cat_sf"/>
</dbReference>
<dbReference type="InterPro" id="IPR004101">
    <property type="entry name" value="Mur_ligase_C"/>
</dbReference>
<dbReference type="InterPro" id="IPR036615">
    <property type="entry name" value="Mur_ligase_C_dom_sf"/>
</dbReference>
<dbReference type="InterPro" id="IPR013221">
    <property type="entry name" value="Mur_ligase_cen"/>
</dbReference>
<dbReference type="InterPro" id="IPR035911">
    <property type="entry name" value="MurE/MurF_N"/>
</dbReference>
<dbReference type="InterPro" id="IPR005761">
    <property type="entry name" value="UDP-N-AcMur-Glu-dNH2Pim_ligase"/>
</dbReference>
<dbReference type="NCBIfam" id="TIGR01085">
    <property type="entry name" value="murE"/>
    <property type="match status" value="1"/>
</dbReference>
<dbReference type="NCBIfam" id="NF001126">
    <property type="entry name" value="PRK00139.1-4"/>
    <property type="match status" value="1"/>
</dbReference>
<dbReference type="PANTHER" id="PTHR23135">
    <property type="entry name" value="MUR LIGASE FAMILY MEMBER"/>
    <property type="match status" value="1"/>
</dbReference>
<dbReference type="PANTHER" id="PTHR23135:SF4">
    <property type="entry name" value="UDP-N-ACETYLMURAMOYL-L-ALANYL-D-GLUTAMATE--2,6-DIAMINOPIMELATE LIGASE MURE HOMOLOG, CHLOROPLASTIC"/>
    <property type="match status" value="1"/>
</dbReference>
<dbReference type="Pfam" id="PF02875">
    <property type="entry name" value="Mur_ligase_C"/>
    <property type="match status" value="1"/>
</dbReference>
<dbReference type="Pfam" id="PF08245">
    <property type="entry name" value="Mur_ligase_M"/>
    <property type="match status" value="1"/>
</dbReference>
<dbReference type="SUPFAM" id="SSF53623">
    <property type="entry name" value="MurD-like peptide ligases, catalytic domain"/>
    <property type="match status" value="1"/>
</dbReference>
<dbReference type="SUPFAM" id="SSF53244">
    <property type="entry name" value="MurD-like peptide ligases, peptide-binding domain"/>
    <property type="match status" value="1"/>
</dbReference>
<dbReference type="SUPFAM" id="SSF63418">
    <property type="entry name" value="MurE/MurF N-terminal domain"/>
    <property type="match status" value="1"/>
</dbReference>
<feature type="chain" id="PRO_0000101917" description="UDP-N-acetylmuramoyl-L-alanyl-D-glutamate--2,6-diaminopimelate ligase">
    <location>
        <begin position="1"/>
        <end position="521"/>
    </location>
</feature>
<feature type="short sequence motif" description="Meso-diaminopimelate recognition motif">
    <location>
        <begin position="433"/>
        <end position="436"/>
    </location>
</feature>
<feature type="binding site" evidence="1">
    <location>
        <position position="33"/>
    </location>
    <ligand>
        <name>UDP-N-acetyl-alpha-D-muramoyl-L-alanyl-D-glutamate</name>
        <dbReference type="ChEBI" id="CHEBI:83900"/>
    </ligand>
</feature>
<feature type="binding site" evidence="1">
    <location>
        <begin position="116"/>
        <end position="122"/>
    </location>
    <ligand>
        <name>ATP</name>
        <dbReference type="ChEBI" id="CHEBI:30616"/>
    </ligand>
</feature>
<feature type="binding site" evidence="1">
    <location>
        <begin position="158"/>
        <end position="159"/>
    </location>
    <ligand>
        <name>UDP-N-acetyl-alpha-D-muramoyl-L-alanyl-D-glutamate</name>
        <dbReference type="ChEBI" id="CHEBI:83900"/>
    </ligand>
</feature>
<feature type="binding site" evidence="1">
    <location>
        <position position="185"/>
    </location>
    <ligand>
        <name>UDP-N-acetyl-alpha-D-muramoyl-L-alanyl-D-glutamate</name>
        <dbReference type="ChEBI" id="CHEBI:83900"/>
    </ligand>
</feature>
<feature type="binding site" evidence="1">
    <location>
        <position position="191"/>
    </location>
    <ligand>
        <name>UDP-N-acetyl-alpha-D-muramoyl-L-alanyl-D-glutamate</name>
        <dbReference type="ChEBI" id="CHEBI:83900"/>
    </ligand>
</feature>
<feature type="binding site" evidence="1">
    <location>
        <position position="193"/>
    </location>
    <ligand>
        <name>UDP-N-acetyl-alpha-D-muramoyl-L-alanyl-D-glutamate</name>
        <dbReference type="ChEBI" id="CHEBI:83900"/>
    </ligand>
</feature>
<feature type="binding site" evidence="1">
    <location>
        <position position="409"/>
    </location>
    <ligand>
        <name>meso-2,6-diaminopimelate</name>
        <dbReference type="ChEBI" id="CHEBI:57791"/>
    </ligand>
</feature>
<feature type="binding site" evidence="1">
    <location>
        <begin position="433"/>
        <end position="436"/>
    </location>
    <ligand>
        <name>meso-2,6-diaminopimelate</name>
        <dbReference type="ChEBI" id="CHEBI:57791"/>
    </ligand>
</feature>
<feature type="binding site" evidence="1">
    <location>
        <position position="483"/>
    </location>
    <ligand>
        <name>meso-2,6-diaminopimelate</name>
        <dbReference type="ChEBI" id="CHEBI:57791"/>
    </ligand>
</feature>
<feature type="binding site" evidence="1">
    <location>
        <position position="487"/>
    </location>
    <ligand>
        <name>meso-2,6-diaminopimelate</name>
        <dbReference type="ChEBI" id="CHEBI:57791"/>
    </ligand>
</feature>
<feature type="modified residue" description="N6-carboxylysine" evidence="1">
    <location>
        <position position="225"/>
    </location>
</feature>
<protein>
    <recommendedName>
        <fullName evidence="1">UDP-N-acetylmuramoyl-L-alanyl-D-glutamate--2,6-diaminopimelate ligase</fullName>
        <ecNumber evidence="1">6.3.2.13</ecNumber>
    </recommendedName>
    <alternativeName>
        <fullName evidence="1">Meso-A2pm-adding enzyme</fullName>
    </alternativeName>
    <alternativeName>
        <fullName evidence="1">Meso-diaminopimelate-adding enzyme</fullName>
    </alternativeName>
    <alternativeName>
        <fullName evidence="1">UDP-MurNAc-L-Ala-D-Glu:meso-diaminopimelate ligase</fullName>
    </alternativeName>
    <alternativeName>
        <fullName evidence="1">UDP-MurNAc-tripeptide synthetase</fullName>
    </alternativeName>
    <alternativeName>
        <fullName evidence="1">UDP-N-acetylmuramyl-tripeptide synthetase</fullName>
    </alternativeName>
</protein>
<evidence type="ECO:0000255" key="1">
    <source>
        <dbReference type="HAMAP-Rule" id="MF_00208"/>
    </source>
</evidence>